<name>MOT11_HUMAN</name>
<dbReference type="EMBL" id="AK074674">
    <property type="protein sequence ID" value="BAC11128.1"/>
    <property type="molecule type" value="mRNA"/>
</dbReference>
<dbReference type="EMBL" id="BC093860">
    <property type="protein sequence ID" value="AAH93860.1"/>
    <property type="molecule type" value="mRNA"/>
</dbReference>
<dbReference type="EMBL" id="BC093886">
    <property type="protein sequence ID" value="AAH93886.1"/>
    <property type="molecule type" value="mRNA"/>
</dbReference>
<dbReference type="RefSeq" id="NP_699188.1">
    <property type="nucleotide sequence ID" value="NM_153357.1"/>
</dbReference>
<dbReference type="SMR" id="Q8NCK7"/>
<dbReference type="BioGRID" id="127822">
    <property type="interactions" value="7"/>
</dbReference>
<dbReference type="FunCoup" id="Q8NCK7">
    <property type="interactions" value="328"/>
</dbReference>
<dbReference type="IntAct" id="Q8NCK7">
    <property type="interactions" value="555"/>
</dbReference>
<dbReference type="STRING" id="9606.ENSP00000310490"/>
<dbReference type="TCDB" id="2.A.1.13.13">
    <property type="family name" value="the major facilitator superfamily (mfs)"/>
</dbReference>
<dbReference type="GlyGen" id="Q8NCK7">
    <property type="glycosylation" value="1 site"/>
</dbReference>
<dbReference type="iPTMnet" id="Q8NCK7"/>
<dbReference type="PhosphoSitePlus" id="Q8NCK7"/>
<dbReference type="BioMuta" id="SLC16A11"/>
<dbReference type="DMDM" id="74730153"/>
<dbReference type="MassIVE" id="Q8NCK7"/>
<dbReference type="PaxDb" id="9606-ENSP00000310490"/>
<dbReference type="Antibodypedia" id="53202">
    <property type="antibodies" value="99 antibodies from 21 providers"/>
</dbReference>
<dbReference type="DNASU" id="162515"/>
<dbReference type="GeneID" id="162515"/>
<dbReference type="KEGG" id="hsa:162515"/>
<dbReference type="UCSC" id="uc002gei.1">
    <property type="organism name" value="human"/>
</dbReference>
<dbReference type="AGR" id="HGNC:23093"/>
<dbReference type="CTD" id="162515"/>
<dbReference type="DisGeNET" id="162515"/>
<dbReference type="GeneCards" id="SLC16A11"/>
<dbReference type="HGNC" id="HGNC:23093">
    <property type="gene designation" value="SLC16A11"/>
</dbReference>
<dbReference type="MIM" id="125853">
    <property type="type" value="phenotype"/>
</dbReference>
<dbReference type="neXtProt" id="NX_Q8NCK7"/>
<dbReference type="PharmGKB" id="PA134976903"/>
<dbReference type="VEuPathDB" id="HostDB:ENSG00000174326"/>
<dbReference type="eggNOG" id="KOG2504">
    <property type="taxonomic scope" value="Eukaryota"/>
</dbReference>
<dbReference type="InParanoid" id="Q8NCK7"/>
<dbReference type="OrthoDB" id="2213137at2759"/>
<dbReference type="PAN-GO" id="Q8NCK7">
    <property type="GO annotations" value="3 GO annotations based on evolutionary models"/>
</dbReference>
<dbReference type="PhylomeDB" id="Q8NCK7"/>
<dbReference type="TreeFam" id="TF313792"/>
<dbReference type="PathwayCommons" id="Q8NCK7"/>
<dbReference type="SignaLink" id="Q8NCK7"/>
<dbReference type="BioGRID-ORCS" id="162515">
    <property type="hits" value="25 hits in 1145 CRISPR screens"/>
</dbReference>
<dbReference type="GenomeRNAi" id="162515"/>
<dbReference type="Pharos" id="Q8NCK7">
    <property type="development level" value="Tbio"/>
</dbReference>
<dbReference type="PRO" id="PR:Q8NCK7"/>
<dbReference type="Proteomes" id="UP000005640">
    <property type="component" value="Chromosome 17"/>
</dbReference>
<dbReference type="RNAct" id="Q8NCK7">
    <property type="molecule type" value="protein"/>
</dbReference>
<dbReference type="Bgee" id="ENSG00000174326">
    <property type="expression patterns" value="Expressed in right uterine tube and 92 other cell types or tissues"/>
</dbReference>
<dbReference type="ExpressionAtlas" id="Q8NCK7">
    <property type="expression patterns" value="baseline and differential"/>
</dbReference>
<dbReference type="GO" id="GO:0005789">
    <property type="term" value="C:endoplasmic reticulum membrane"/>
    <property type="evidence" value="ECO:0000314"/>
    <property type="project" value="UniProtKB"/>
</dbReference>
<dbReference type="GO" id="GO:0005886">
    <property type="term" value="C:plasma membrane"/>
    <property type="evidence" value="ECO:0000314"/>
    <property type="project" value="UniProtKB"/>
</dbReference>
<dbReference type="GO" id="GO:0008028">
    <property type="term" value="F:monocarboxylic acid transmembrane transporter activity"/>
    <property type="evidence" value="ECO:0000318"/>
    <property type="project" value="GO_Central"/>
</dbReference>
<dbReference type="GO" id="GO:0050833">
    <property type="term" value="F:pyruvate transmembrane transporter activity"/>
    <property type="evidence" value="ECO:0000314"/>
    <property type="project" value="UniProtKB"/>
</dbReference>
<dbReference type="GO" id="GO:0015293">
    <property type="term" value="F:symporter activity"/>
    <property type="evidence" value="ECO:0007669"/>
    <property type="project" value="UniProtKB-KW"/>
</dbReference>
<dbReference type="GO" id="GO:0006629">
    <property type="term" value="P:lipid metabolic process"/>
    <property type="evidence" value="ECO:0000314"/>
    <property type="project" value="UniProtKB"/>
</dbReference>
<dbReference type="FunFam" id="1.20.1250.20:FF:000187">
    <property type="entry name" value="Solute carrier family 16 member 11"/>
    <property type="match status" value="1"/>
</dbReference>
<dbReference type="Gene3D" id="1.20.1250.20">
    <property type="entry name" value="MFS general substrate transporter like domains"/>
    <property type="match status" value="1"/>
</dbReference>
<dbReference type="InterPro" id="IPR011701">
    <property type="entry name" value="MFS"/>
</dbReference>
<dbReference type="InterPro" id="IPR020846">
    <property type="entry name" value="MFS_dom"/>
</dbReference>
<dbReference type="InterPro" id="IPR036259">
    <property type="entry name" value="MFS_trans_sf"/>
</dbReference>
<dbReference type="InterPro" id="IPR050327">
    <property type="entry name" value="Proton-linked_MCT"/>
</dbReference>
<dbReference type="PANTHER" id="PTHR11360">
    <property type="entry name" value="MONOCARBOXYLATE TRANSPORTER"/>
    <property type="match status" value="1"/>
</dbReference>
<dbReference type="PANTHER" id="PTHR11360:SF80">
    <property type="entry name" value="MONOCARBOXYLATE TRANSPORTER 11"/>
    <property type="match status" value="1"/>
</dbReference>
<dbReference type="Pfam" id="PF07690">
    <property type="entry name" value="MFS_1"/>
    <property type="match status" value="1"/>
</dbReference>
<dbReference type="SUPFAM" id="SSF103473">
    <property type="entry name" value="MFS general substrate transporter"/>
    <property type="match status" value="1"/>
</dbReference>
<dbReference type="PROSITE" id="PS50850">
    <property type="entry name" value="MFS"/>
    <property type="match status" value="1"/>
</dbReference>
<reference key="1">
    <citation type="journal article" date="2004" name="Nat. Genet.">
        <title>Complete sequencing and characterization of 21,243 full-length human cDNAs.</title>
        <authorList>
            <person name="Ota T."/>
            <person name="Suzuki Y."/>
            <person name="Nishikawa T."/>
            <person name="Otsuki T."/>
            <person name="Sugiyama T."/>
            <person name="Irie R."/>
            <person name="Wakamatsu A."/>
            <person name="Hayashi K."/>
            <person name="Sato H."/>
            <person name="Nagai K."/>
            <person name="Kimura K."/>
            <person name="Makita H."/>
            <person name="Sekine M."/>
            <person name="Obayashi M."/>
            <person name="Nishi T."/>
            <person name="Shibahara T."/>
            <person name="Tanaka T."/>
            <person name="Ishii S."/>
            <person name="Yamamoto J."/>
            <person name="Saito K."/>
            <person name="Kawai Y."/>
            <person name="Isono Y."/>
            <person name="Nakamura Y."/>
            <person name="Nagahari K."/>
            <person name="Murakami K."/>
            <person name="Yasuda T."/>
            <person name="Iwayanagi T."/>
            <person name="Wagatsuma M."/>
            <person name="Shiratori A."/>
            <person name="Sudo H."/>
            <person name="Hosoiri T."/>
            <person name="Kaku Y."/>
            <person name="Kodaira H."/>
            <person name="Kondo H."/>
            <person name="Sugawara M."/>
            <person name="Takahashi M."/>
            <person name="Kanda K."/>
            <person name="Yokoi T."/>
            <person name="Furuya T."/>
            <person name="Kikkawa E."/>
            <person name="Omura Y."/>
            <person name="Abe K."/>
            <person name="Kamihara K."/>
            <person name="Katsuta N."/>
            <person name="Sato K."/>
            <person name="Tanikawa M."/>
            <person name="Yamazaki M."/>
            <person name="Ninomiya K."/>
            <person name="Ishibashi T."/>
            <person name="Yamashita H."/>
            <person name="Murakawa K."/>
            <person name="Fujimori K."/>
            <person name="Tanai H."/>
            <person name="Kimata M."/>
            <person name="Watanabe M."/>
            <person name="Hiraoka S."/>
            <person name="Chiba Y."/>
            <person name="Ishida S."/>
            <person name="Ono Y."/>
            <person name="Takiguchi S."/>
            <person name="Watanabe S."/>
            <person name="Yosida M."/>
            <person name="Hotuta T."/>
            <person name="Kusano J."/>
            <person name="Kanehori K."/>
            <person name="Takahashi-Fujii A."/>
            <person name="Hara H."/>
            <person name="Tanase T.-O."/>
            <person name="Nomura Y."/>
            <person name="Togiya S."/>
            <person name="Komai F."/>
            <person name="Hara R."/>
            <person name="Takeuchi K."/>
            <person name="Arita M."/>
            <person name="Imose N."/>
            <person name="Musashino K."/>
            <person name="Yuuki H."/>
            <person name="Oshima A."/>
            <person name="Sasaki N."/>
            <person name="Aotsuka S."/>
            <person name="Yoshikawa Y."/>
            <person name="Matsunawa H."/>
            <person name="Ichihara T."/>
            <person name="Shiohata N."/>
            <person name="Sano S."/>
            <person name="Moriya S."/>
            <person name="Momiyama H."/>
            <person name="Satoh N."/>
            <person name="Takami S."/>
            <person name="Terashima Y."/>
            <person name="Suzuki O."/>
            <person name="Nakagawa S."/>
            <person name="Senoh A."/>
            <person name="Mizoguchi H."/>
            <person name="Goto Y."/>
            <person name="Shimizu F."/>
            <person name="Wakebe H."/>
            <person name="Hishigaki H."/>
            <person name="Watanabe T."/>
            <person name="Sugiyama A."/>
            <person name="Takemoto M."/>
            <person name="Kawakami B."/>
            <person name="Yamazaki M."/>
            <person name="Watanabe K."/>
            <person name="Kumagai A."/>
            <person name="Itakura S."/>
            <person name="Fukuzumi Y."/>
            <person name="Fujimori Y."/>
            <person name="Komiyama M."/>
            <person name="Tashiro H."/>
            <person name="Tanigami A."/>
            <person name="Fujiwara T."/>
            <person name="Ono T."/>
            <person name="Yamada K."/>
            <person name="Fujii Y."/>
            <person name="Ozaki K."/>
            <person name="Hirao M."/>
            <person name="Ohmori Y."/>
            <person name="Kawabata A."/>
            <person name="Hikiji T."/>
            <person name="Kobatake N."/>
            <person name="Inagaki H."/>
            <person name="Ikema Y."/>
            <person name="Okamoto S."/>
            <person name="Okitani R."/>
            <person name="Kawakami T."/>
            <person name="Noguchi S."/>
            <person name="Itoh T."/>
            <person name="Shigeta K."/>
            <person name="Senba T."/>
            <person name="Matsumura K."/>
            <person name="Nakajima Y."/>
            <person name="Mizuno T."/>
            <person name="Morinaga M."/>
            <person name="Sasaki M."/>
            <person name="Togashi T."/>
            <person name="Oyama M."/>
            <person name="Hata H."/>
            <person name="Watanabe M."/>
            <person name="Komatsu T."/>
            <person name="Mizushima-Sugano J."/>
            <person name="Satoh T."/>
            <person name="Shirai Y."/>
            <person name="Takahashi Y."/>
            <person name="Nakagawa K."/>
            <person name="Okumura K."/>
            <person name="Nagase T."/>
            <person name="Nomura N."/>
            <person name="Kikuchi H."/>
            <person name="Masuho Y."/>
            <person name="Yamashita R."/>
            <person name="Nakai K."/>
            <person name="Yada T."/>
            <person name="Nakamura Y."/>
            <person name="Ohara O."/>
            <person name="Isogai T."/>
            <person name="Sugano S."/>
        </authorList>
    </citation>
    <scope>NUCLEOTIDE SEQUENCE [LARGE SCALE MRNA]</scope>
    <source>
        <tissue>Mammary gland</tissue>
    </source>
</reference>
<reference key="2">
    <citation type="journal article" date="2004" name="Genome Res.">
        <title>The status, quality, and expansion of the NIH full-length cDNA project: the Mammalian Gene Collection (MGC).</title>
        <authorList>
            <consortium name="The MGC Project Team"/>
        </authorList>
    </citation>
    <scope>NUCLEOTIDE SEQUENCE [LARGE SCALE MRNA]</scope>
    <source>
        <tissue>Heart</tissue>
        <tissue>Lung</tissue>
    </source>
</reference>
<reference key="3">
    <citation type="journal article" date="2014" name="Nature">
        <title>Sequence variants in SLC16A11 are a common risk factor for type 2 diabetes in Mexico.</title>
        <authorList>
            <consortium name="The SIGMA Type 2 Diabetes Consortium"/>
        </authorList>
    </citation>
    <scope>FUNCTION</scope>
    <scope>SUBCELLULAR LOCATION</scope>
    <scope>TISSUE SPECIFICITY</scope>
    <scope>INVOLVEMENT IN T2D</scope>
    <scope>VARIANTS ILE-113; GLY-127; SER-340 AND THR-443</scope>
</reference>
<reference key="4">
    <citation type="journal article" date="2017" name="Cell">
        <title>Type 2 diabetes variants disrupt function of SLC16A11 through two distinct mechanisms.</title>
        <authorList>
            <consortium name="MEDIA Consortium"/>
            <consortium name="SIGMA T2D Consortium"/>
            <person name="Rusu V."/>
            <person name="Hoch E."/>
            <person name="Mercader J.M."/>
            <person name="Tenen D.E."/>
            <person name="Gymrek M."/>
            <person name="Hartigan C.R."/>
            <person name="DeRan M."/>
            <person name="von Grotthuss M."/>
            <person name="Fontanillas P."/>
            <person name="Spooner A."/>
            <person name="Guzman G."/>
            <person name="Deik A.A."/>
            <person name="Pierce K.A."/>
            <person name="Dennis C."/>
            <person name="Clish C.B."/>
            <person name="Carr S.A."/>
            <person name="Wagner B.K."/>
            <person name="Schenone M."/>
            <person name="Ng M.C.Y."/>
            <person name="Chen B.H."/>
            <person name="Centeno-Cruz F."/>
            <person name="Zerrweck C."/>
            <person name="Orozco L."/>
            <person name="Altshuler D.M."/>
            <person name="Schreiber S.L."/>
            <person name="Florez J.C."/>
            <person name="Jacobs S.B.R."/>
            <person name="Lander E.S."/>
        </authorList>
    </citation>
    <scope>FUNCTION</scope>
    <scope>TRANSPORTER ACTIVITY</scope>
    <scope>SUBCELLULAR LOCATION</scope>
    <scope>INTERACTION WITH BSG</scope>
    <scope>INVOLVEMENT IN T2D</scope>
    <scope>CHARACTERIZATION OF VARIANTS ILE-113; GLY-127; SER-340 AND THR-443</scope>
</reference>
<gene>
    <name type="primary">SLC16A11</name>
    <name type="synonym">MCT11</name>
</gene>
<organism>
    <name type="scientific">Homo sapiens</name>
    <name type="common">Human</name>
    <dbReference type="NCBI Taxonomy" id="9606"/>
    <lineage>
        <taxon>Eukaryota</taxon>
        <taxon>Metazoa</taxon>
        <taxon>Chordata</taxon>
        <taxon>Craniata</taxon>
        <taxon>Vertebrata</taxon>
        <taxon>Euteleostomi</taxon>
        <taxon>Mammalia</taxon>
        <taxon>Eutheria</taxon>
        <taxon>Euarchontoglires</taxon>
        <taxon>Primates</taxon>
        <taxon>Haplorrhini</taxon>
        <taxon>Catarrhini</taxon>
        <taxon>Hominidae</taxon>
        <taxon>Homo</taxon>
    </lineage>
</organism>
<proteinExistence type="evidence at protein level"/>
<keyword id="KW-1003">Cell membrane</keyword>
<keyword id="KW-0219">Diabetes mellitus</keyword>
<keyword id="KW-0256">Endoplasmic reticulum</keyword>
<keyword id="KW-0443">Lipid metabolism</keyword>
<keyword id="KW-0472">Membrane</keyword>
<keyword id="KW-1185">Reference proteome</keyword>
<keyword id="KW-0769">Symport</keyword>
<keyword id="KW-0812">Transmembrane</keyword>
<keyword id="KW-1133">Transmembrane helix</keyword>
<keyword id="KW-0813">Transport</keyword>
<comment type="function">
    <text evidence="3 4">Proton-linked monocarboxylate transporter. It catalyzes the transport of pyruvate across the plasma membrane (PubMed:28666119). Probably involved in hepatic lipid metabolism: overexpression results in an increase of triacylglycerol(TAG) levels, small increases in intracellular diacylglycerols and decreases in lysophosphatidylcholine, cholesterol ester and sphingomyelin lipids (PubMed:24390345).</text>
</comment>
<comment type="catalytic activity">
    <reaction evidence="4">
        <text>pyruvate(out) + H(+)(out) = pyruvate(in) + H(+)(in)</text>
        <dbReference type="Rhea" id="RHEA:64720"/>
        <dbReference type="ChEBI" id="CHEBI:15361"/>
        <dbReference type="ChEBI" id="CHEBI:15378"/>
    </reaction>
</comment>
<comment type="subunit">
    <text evidence="4">Interacts with isoform 2 of BSG.</text>
</comment>
<comment type="interaction">
    <interactant intactId="EBI-21840241">
        <id>Q8NCK7</id>
    </interactant>
    <interactant intactId="EBI-750709">
        <id>P35613</id>
        <label>BSG</label>
    </interactant>
    <organismsDiffer>false</organismsDiffer>
    <experiments>5</experiments>
</comment>
<comment type="subcellular location">
    <subcellularLocation>
        <location evidence="3">Endoplasmic reticulum membrane</location>
        <topology evidence="1">Multi-pass membrane protein</topology>
    </subcellularLocation>
    <subcellularLocation>
        <location evidence="4">Cell membrane</location>
        <topology evidence="1">Multi-pass membrane protein</topology>
    </subcellularLocation>
</comment>
<comment type="tissue specificity">
    <text evidence="3">Expressed in liver, salivary gland and thyroid.</text>
</comment>
<comment type="disease" evidence="3">
    <disease id="DI-02060">
        <name>Type 2 diabetes mellitus</name>
        <acronym>T2D</acronym>
        <description>A multifactorial disorder of glucose homeostasis caused by a lack of sensitivity to insulin. Affected individuals usually have an obese body habitus and manifestations of a metabolic syndrome characterized by diabetes, insulin resistance, hypertension and hypertriglyceridemia. The disease results in long-term complications that affect the eyes, kidneys, nerves, and blood vessels.</description>
        <dbReference type="MIM" id="125853"/>
    </disease>
    <text evidence="3 4">Disease susceptibility is associated with variants affecting the gene represented in this entry. A risk haplotype spanning SLC16A11 is associated with a 20% increased risk for T2D. The haplotype includes 5 SLC16A11 variants in strong linkage disequilibrium: variants Ile-113, Gly-127, Ser-340, Thr-443 and a silent variant. This risk haplotype probably derives from H.sapiens neanderthalensis (Neanderthal) introgression and is present at 50% frequency in Native-American samples, 10% in east Asian, while it is rare in European and African samples populations. The risk haplotype contains a cis-eQTL that is responsible for reduced SLC16A11 expression in liver (PubMed:28666119).</text>
</comment>
<comment type="similarity">
    <text evidence="5">Belongs to the major facilitator superfamily. Monocarboxylate porter (TC 2.A.1.13) family.</text>
</comment>
<comment type="caution">
    <text evidence="5">It is uncertain whether Met-1 or Met-25 is the initiator.</text>
</comment>
<feature type="chain" id="PRO_0000286673" description="Monocarboxylate transporter 11">
    <location>
        <begin position="1"/>
        <end position="471"/>
    </location>
</feature>
<feature type="topological domain" description="Cytoplasmic" evidence="6">
    <location>
        <begin position="1"/>
        <end position="35"/>
    </location>
</feature>
<feature type="transmembrane region" description="Helical" evidence="1">
    <location>
        <begin position="36"/>
        <end position="56"/>
    </location>
</feature>
<feature type="transmembrane region" description="Helical" evidence="1">
    <location>
        <begin position="78"/>
        <end position="98"/>
    </location>
</feature>
<feature type="transmembrane region" description="Helical" evidence="1">
    <location>
        <begin position="106"/>
        <end position="126"/>
    </location>
</feature>
<feature type="transmembrane region" description="Helical" evidence="1">
    <location>
        <begin position="131"/>
        <end position="151"/>
    </location>
</feature>
<feature type="transmembrane region" description="Helical" evidence="1">
    <location>
        <begin position="163"/>
        <end position="183"/>
    </location>
</feature>
<feature type="transmembrane region" description="Helical" evidence="1">
    <location>
        <begin position="198"/>
        <end position="218"/>
    </location>
</feature>
<feature type="transmembrane region" description="Helical" evidence="1">
    <location>
        <begin position="243"/>
        <end position="263"/>
    </location>
</feature>
<feature type="transmembrane region" description="Helical" evidence="1">
    <location>
        <begin position="273"/>
        <end position="293"/>
    </location>
</feature>
<feature type="transmembrane region" description="Helical" evidence="1">
    <location>
        <begin position="312"/>
        <end position="332"/>
    </location>
</feature>
<feature type="transmembrane region" description="Helical" evidence="1">
    <location>
        <begin position="333"/>
        <end position="353"/>
    </location>
</feature>
<feature type="transmembrane region" description="Helical" evidence="1">
    <location>
        <begin position="367"/>
        <end position="389"/>
    </location>
</feature>
<feature type="transmembrane region" description="Helical" evidence="1">
    <location>
        <begin position="407"/>
        <end position="427"/>
    </location>
</feature>
<feature type="topological domain" description="Cytoplasmic" evidence="6">
    <location>
        <begin position="428"/>
        <end position="471"/>
    </location>
</feature>
<feature type="region of interest" description="Disordered" evidence="2">
    <location>
        <begin position="1"/>
        <end position="31"/>
    </location>
</feature>
<feature type="compositionally biased region" description="Basic residues" evidence="2">
    <location>
        <begin position="1"/>
        <end position="13"/>
    </location>
</feature>
<feature type="compositionally biased region" description="Low complexity" evidence="2">
    <location>
        <begin position="19"/>
        <end position="28"/>
    </location>
</feature>
<feature type="sequence variant" id="VAR_070544" description="Risk factor for T2D when associated with G-127, S-340 and T-443; reduced pyruvate transmembrane transporter activity, loss of interaction with BSG and decreased localization to plasma membrane when associated with G-127, S-340 and T-443; dbSNP:rs117767867." evidence="3 4">
    <original>V</original>
    <variation>I</variation>
    <location>
        <position position="113"/>
    </location>
</feature>
<feature type="sequence variant" id="VAR_032157" description="Risk factor for T2D when associated with I-113, S-340 and T-443; reduced pyruvate transmembrane transporter activity, loss of interaction with BSG and decreased localization to plasma membrane when associated with I-113, S-340 and T-443; dbSNP:rs13342692." evidence="3 4">
    <original>D</original>
    <variation>G</variation>
    <location>
        <position position="127"/>
    </location>
</feature>
<feature type="sequence variant" id="VAR_070545" description="Risk factor for T2D when associated with I-113, G-127 and T-443; reduced pyruvate transmembrane transporter activity, loss of interaction with BSG and decreased localization to plasma membrane when associated with I-113, G-127 and T-443; dbSNP:rs75418188." evidence="3 4">
    <original>G</original>
    <variation>S</variation>
    <location>
        <position position="340"/>
    </location>
</feature>
<feature type="sequence variant" id="VAR_070546" description="Risk factor for T2D when associated with I-113, G-127 and S-340; reduced pyruvate transmembrane transporter activity, loss of interaction with BSG and decreased localization to plasma membrane when associated with I-113, G-127 and S-340; dbSNP:rs75493593." evidence="3 4">
    <original>P</original>
    <variation>T</variation>
    <location>
        <position position="443"/>
    </location>
</feature>
<sequence>MPAPQRKHRRGGFSHRCFPTPQTAMTPQPAGPPDGGWGWVVAAAAFAINGLSYGLLRSLGLAFPDLAEHFDRSAQDTAWISALALAVQQAASPVGSALSTRWGARPVVMVGGVLASLGFVFSAFASDLLHLYLGLGLLAGFGWALVFAPALGTLSRYFSRRRVLAVGLALTGNGASSLLLAPALQLLLDTFGWRGALLLLGAITLHLTPCGALLLPLVLPGDPPAPPRSPLAALGLSLFTRRAFSIFALGTALVGGGYFVPYVHLAPHALDRGLGGYGAALVVAVAAMGDAGARLVCGWLADQGWVPLPRLLAVFGALTGLGLWVVGLVPVVGGEESWGGPLLAAAVAYGLSAGSYAPLVFGVLPGLVGVGGVVQATGLVMMLMSLGGLLGPPLSGFLRDETGDFTASFLLSGSLILSGSFIYIGLPRALPSCGPASPPATPPPETGELLPAPQAVLLSPGGPGSTLDTTC</sequence>
<accession>Q8NCK7</accession>
<protein>
    <recommendedName>
        <fullName>Monocarboxylate transporter 11</fullName>
        <shortName>MCT 11</shortName>
    </recommendedName>
    <alternativeName>
        <fullName>Solute carrier family 16 member 11</fullName>
    </alternativeName>
</protein>
<evidence type="ECO:0000255" key="1"/>
<evidence type="ECO:0000256" key="2">
    <source>
        <dbReference type="SAM" id="MobiDB-lite"/>
    </source>
</evidence>
<evidence type="ECO:0000269" key="3">
    <source>
    </source>
</evidence>
<evidence type="ECO:0000269" key="4">
    <source>
    </source>
</evidence>
<evidence type="ECO:0000305" key="5"/>
<evidence type="ECO:0000305" key="6">
    <source>
    </source>
</evidence>